<dbReference type="EMBL" id="CP001197">
    <property type="protein sequence ID" value="ACL07264.1"/>
    <property type="molecule type" value="Genomic_DNA"/>
</dbReference>
<dbReference type="SMR" id="B8DPH7"/>
<dbReference type="STRING" id="883.DvMF_0307"/>
<dbReference type="KEGG" id="dvm:DvMF_0307"/>
<dbReference type="eggNOG" id="COG1220">
    <property type="taxonomic scope" value="Bacteria"/>
</dbReference>
<dbReference type="HOGENOM" id="CLU_033123_0_0_7"/>
<dbReference type="OrthoDB" id="9804062at2"/>
<dbReference type="GO" id="GO:0009376">
    <property type="term" value="C:HslUV protease complex"/>
    <property type="evidence" value="ECO:0007669"/>
    <property type="project" value="UniProtKB-UniRule"/>
</dbReference>
<dbReference type="GO" id="GO:0005524">
    <property type="term" value="F:ATP binding"/>
    <property type="evidence" value="ECO:0007669"/>
    <property type="project" value="UniProtKB-UniRule"/>
</dbReference>
<dbReference type="GO" id="GO:0016887">
    <property type="term" value="F:ATP hydrolysis activity"/>
    <property type="evidence" value="ECO:0007669"/>
    <property type="project" value="InterPro"/>
</dbReference>
<dbReference type="GO" id="GO:0008233">
    <property type="term" value="F:peptidase activity"/>
    <property type="evidence" value="ECO:0007669"/>
    <property type="project" value="InterPro"/>
</dbReference>
<dbReference type="GO" id="GO:0036402">
    <property type="term" value="F:proteasome-activating activity"/>
    <property type="evidence" value="ECO:0007669"/>
    <property type="project" value="UniProtKB-UniRule"/>
</dbReference>
<dbReference type="GO" id="GO:0043335">
    <property type="term" value="P:protein unfolding"/>
    <property type="evidence" value="ECO:0007669"/>
    <property type="project" value="UniProtKB-UniRule"/>
</dbReference>
<dbReference type="GO" id="GO:0051603">
    <property type="term" value="P:proteolysis involved in protein catabolic process"/>
    <property type="evidence" value="ECO:0007669"/>
    <property type="project" value="TreeGrafter"/>
</dbReference>
<dbReference type="CDD" id="cd19498">
    <property type="entry name" value="RecA-like_HslU"/>
    <property type="match status" value="1"/>
</dbReference>
<dbReference type="FunFam" id="3.40.50.300:FF:000220">
    <property type="entry name" value="ATP-dependent protease ATPase subunit HslU"/>
    <property type="match status" value="1"/>
</dbReference>
<dbReference type="Gene3D" id="1.10.8.60">
    <property type="match status" value="1"/>
</dbReference>
<dbReference type="Gene3D" id="3.40.50.300">
    <property type="entry name" value="P-loop containing nucleotide triphosphate hydrolases"/>
    <property type="match status" value="2"/>
</dbReference>
<dbReference type="HAMAP" id="MF_00249">
    <property type="entry name" value="HslU"/>
    <property type="match status" value="1"/>
</dbReference>
<dbReference type="InterPro" id="IPR003593">
    <property type="entry name" value="AAA+_ATPase"/>
</dbReference>
<dbReference type="InterPro" id="IPR050052">
    <property type="entry name" value="ATP-dep_Clp_protease_ClpX"/>
</dbReference>
<dbReference type="InterPro" id="IPR003959">
    <property type="entry name" value="ATPase_AAA_core"/>
</dbReference>
<dbReference type="InterPro" id="IPR019489">
    <property type="entry name" value="Clp_ATPase_C"/>
</dbReference>
<dbReference type="InterPro" id="IPR004491">
    <property type="entry name" value="HslU"/>
</dbReference>
<dbReference type="InterPro" id="IPR027417">
    <property type="entry name" value="P-loop_NTPase"/>
</dbReference>
<dbReference type="NCBIfam" id="TIGR00390">
    <property type="entry name" value="hslU"/>
    <property type="match status" value="1"/>
</dbReference>
<dbReference type="NCBIfam" id="NF003544">
    <property type="entry name" value="PRK05201.1"/>
    <property type="match status" value="1"/>
</dbReference>
<dbReference type="PANTHER" id="PTHR48102">
    <property type="entry name" value="ATP-DEPENDENT CLP PROTEASE ATP-BINDING SUBUNIT CLPX-LIKE, MITOCHONDRIAL-RELATED"/>
    <property type="match status" value="1"/>
</dbReference>
<dbReference type="PANTHER" id="PTHR48102:SF3">
    <property type="entry name" value="ATP-DEPENDENT PROTEASE ATPASE SUBUNIT HSLU"/>
    <property type="match status" value="1"/>
</dbReference>
<dbReference type="Pfam" id="PF00004">
    <property type="entry name" value="AAA"/>
    <property type="match status" value="1"/>
</dbReference>
<dbReference type="Pfam" id="PF07724">
    <property type="entry name" value="AAA_2"/>
    <property type="match status" value="1"/>
</dbReference>
<dbReference type="SMART" id="SM00382">
    <property type="entry name" value="AAA"/>
    <property type="match status" value="1"/>
</dbReference>
<dbReference type="SMART" id="SM01086">
    <property type="entry name" value="ClpB_D2-small"/>
    <property type="match status" value="1"/>
</dbReference>
<dbReference type="SUPFAM" id="SSF52540">
    <property type="entry name" value="P-loop containing nucleoside triphosphate hydrolases"/>
    <property type="match status" value="1"/>
</dbReference>
<accession>B8DPH7</accession>
<organism>
    <name type="scientific">Nitratidesulfovibrio vulgaris (strain DSM 19637 / Miyazaki F)</name>
    <name type="common">Desulfovibrio vulgaris</name>
    <dbReference type="NCBI Taxonomy" id="883"/>
    <lineage>
        <taxon>Bacteria</taxon>
        <taxon>Pseudomonadati</taxon>
        <taxon>Thermodesulfobacteriota</taxon>
        <taxon>Desulfovibrionia</taxon>
        <taxon>Desulfovibrionales</taxon>
        <taxon>Desulfovibrionaceae</taxon>
        <taxon>Nitratidesulfovibrio</taxon>
    </lineage>
</organism>
<keyword id="KW-0067">ATP-binding</keyword>
<keyword id="KW-0143">Chaperone</keyword>
<keyword id="KW-0963">Cytoplasm</keyword>
<keyword id="KW-0547">Nucleotide-binding</keyword>
<keyword id="KW-0346">Stress response</keyword>
<protein>
    <recommendedName>
        <fullName evidence="1">ATP-dependent protease ATPase subunit HslU</fullName>
    </recommendedName>
    <alternativeName>
        <fullName evidence="1">Unfoldase HslU</fullName>
    </alternativeName>
</protein>
<proteinExistence type="inferred from homology"/>
<comment type="function">
    <text evidence="1">ATPase subunit of a proteasome-like degradation complex; this subunit has chaperone activity. The binding of ATP and its subsequent hydrolysis by HslU are essential for unfolding of protein substrates subsequently hydrolyzed by HslV. HslU recognizes the N-terminal part of its protein substrates and unfolds these before they are guided to HslV for hydrolysis.</text>
</comment>
<comment type="subunit">
    <text evidence="1">A double ring-shaped homohexamer of HslV is capped on each side by a ring-shaped HslU homohexamer. The assembly of the HslU/HslV complex is dependent on binding of ATP.</text>
</comment>
<comment type="subcellular location">
    <subcellularLocation>
        <location evidence="1">Cytoplasm</location>
    </subcellularLocation>
</comment>
<comment type="similarity">
    <text evidence="1">Belongs to the ClpX chaperone family. HslU subfamily.</text>
</comment>
<sequence>MSNLTPREIVSELDKYIVGQNAAKRMVAVAMRNRWRRQQLDPALRDEIAPKNIIMMGPTGVGKTEIARRLAKLSASPFIKVEATKFTEVGYVGRDVESMVRDLMEIGIALVRAEENEKVRVKAEARAEERLLDLLLPGGAPQPAPAQGMGGLTFDLSASHSGGQAIPQPPAQADASQASPPTGTGSAPDSRSSTREKLRTLWHGGKLDDREVDMEVEESGGPQVGVLSMPGLEDVGSQVRDMFSKVFPSRRKRRRMKVRDAFNLLTQEEADRLIDHDRVSDLARERVEQTGIIFIDEIDKIASGSTQKSSDVSREGVQRDLLPIVEGSVVNTKYGMVRTDHILFIAAGAFHFSKPSDLIPELQGRFPLRAELSALGKDDFLRILTEPHNALTRQYTALLQTEGVHIEFTGDALREIAAFAEETNAQTENIGARRLYTILEKILADLSFEAPDRSGDRVTVDSDYVREHLADVRANKDLSRYIL</sequence>
<reference key="1">
    <citation type="submission" date="2008-10" db="EMBL/GenBank/DDBJ databases">
        <title>Complete sequence of Desulfovibrio vulgaris str. 'Miyazaki F'.</title>
        <authorList>
            <person name="Lucas S."/>
            <person name="Copeland A."/>
            <person name="Lapidus A."/>
            <person name="Glavina del Rio T."/>
            <person name="Dalin E."/>
            <person name="Tice H."/>
            <person name="Bruce D."/>
            <person name="Goodwin L."/>
            <person name="Pitluck S."/>
            <person name="Sims D."/>
            <person name="Brettin T."/>
            <person name="Detter J.C."/>
            <person name="Han C."/>
            <person name="Larimer F."/>
            <person name="Land M."/>
            <person name="Hauser L."/>
            <person name="Kyrpides N."/>
            <person name="Mikhailova N."/>
            <person name="Hazen T.C."/>
            <person name="Richardson P."/>
        </authorList>
    </citation>
    <scope>NUCLEOTIDE SEQUENCE [LARGE SCALE GENOMIC DNA]</scope>
    <source>
        <strain>DSM 19637 / Miyazaki F</strain>
    </source>
</reference>
<gene>
    <name evidence="1" type="primary">hslU</name>
    <name type="ordered locus">DvMF_0307</name>
</gene>
<feature type="chain" id="PRO_1000119101" description="ATP-dependent protease ATPase subunit HslU">
    <location>
        <begin position="1"/>
        <end position="483"/>
    </location>
</feature>
<feature type="region of interest" description="Disordered" evidence="2">
    <location>
        <begin position="136"/>
        <end position="212"/>
    </location>
</feature>
<feature type="compositionally biased region" description="Low complexity" evidence="2">
    <location>
        <begin position="136"/>
        <end position="147"/>
    </location>
</feature>
<feature type="compositionally biased region" description="Low complexity" evidence="2">
    <location>
        <begin position="171"/>
        <end position="181"/>
    </location>
</feature>
<feature type="compositionally biased region" description="Polar residues" evidence="2">
    <location>
        <begin position="182"/>
        <end position="191"/>
    </location>
</feature>
<feature type="compositionally biased region" description="Basic and acidic residues" evidence="2">
    <location>
        <begin position="192"/>
        <end position="209"/>
    </location>
</feature>
<feature type="binding site" evidence="1">
    <location>
        <position position="18"/>
    </location>
    <ligand>
        <name>ATP</name>
        <dbReference type="ChEBI" id="CHEBI:30616"/>
    </ligand>
</feature>
<feature type="binding site" evidence="1">
    <location>
        <begin position="60"/>
        <end position="65"/>
    </location>
    <ligand>
        <name>ATP</name>
        <dbReference type="ChEBI" id="CHEBI:30616"/>
    </ligand>
</feature>
<feature type="binding site" evidence="1">
    <location>
        <position position="296"/>
    </location>
    <ligand>
        <name>ATP</name>
        <dbReference type="ChEBI" id="CHEBI:30616"/>
    </ligand>
</feature>
<feature type="binding site" evidence="1">
    <location>
        <position position="361"/>
    </location>
    <ligand>
        <name>ATP</name>
        <dbReference type="ChEBI" id="CHEBI:30616"/>
    </ligand>
</feature>
<feature type="binding site" evidence="1">
    <location>
        <position position="433"/>
    </location>
    <ligand>
        <name>ATP</name>
        <dbReference type="ChEBI" id="CHEBI:30616"/>
    </ligand>
</feature>
<evidence type="ECO:0000255" key="1">
    <source>
        <dbReference type="HAMAP-Rule" id="MF_00249"/>
    </source>
</evidence>
<evidence type="ECO:0000256" key="2">
    <source>
        <dbReference type="SAM" id="MobiDB-lite"/>
    </source>
</evidence>
<name>HSLU_NITV9</name>